<gene>
    <name evidence="1" type="primary">whiA</name>
    <name type="ordered locus">Helmi_06440</name>
    <name type="ORF">HM1_1308</name>
</gene>
<accession>B0TGK8</accession>
<dbReference type="EMBL" id="CP000930">
    <property type="protein sequence ID" value="ABZ83269.1"/>
    <property type="molecule type" value="Genomic_DNA"/>
</dbReference>
<dbReference type="RefSeq" id="WP_012281803.1">
    <property type="nucleotide sequence ID" value="NC_010337.2"/>
</dbReference>
<dbReference type="SMR" id="B0TGK8"/>
<dbReference type="STRING" id="498761.HM1_1308"/>
<dbReference type="KEGG" id="hmo:HM1_1308"/>
<dbReference type="eggNOG" id="COG1481">
    <property type="taxonomic scope" value="Bacteria"/>
</dbReference>
<dbReference type="HOGENOM" id="CLU_053282_0_0_9"/>
<dbReference type="OrthoDB" id="401278at2"/>
<dbReference type="Proteomes" id="UP000008550">
    <property type="component" value="Chromosome"/>
</dbReference>
<dbReference type="GO" id="GO:0003677">
    <property type="term" value="F:DNA binding"/>
    <property type="evidence" value="ECO:0007669"/>
    <property type="project" value="UniProtKB-UniRule"/>
</dbReference>
<dbReference type="GO" id="GO:0004519">
    <property type="term" value="F:endonuclease activity"/>
    <property type="evidence" value="ECO:0007669"/>
    <property type="project" value="InterPro"/>
</dbReference>
<dbReference type="GO" id="GO:0051301">
    <property type="term" value="P:cell division"/>
    <property type="evidence" value="ECO:0007669"/>
    <property type="project" value="UniProtKB-UniRule"/>
</dbReference>
<dbReference type="GO" id="GO:0043937">
    <property type="term" value="P:regulation of sporulation"/>
    <property type="evidence" value="ECO:0007669"/>
    <property type="project" value="InterPro"/>
</dbReference>
<dbReference type="Gene3D" id="3.10.28.10">
    <property type="entry name" value="Homing endonucleases"/>
    <property type="match status" value="1"/>
</dbReference>
<dbReference type="HAMAP" id="MF_01420">
    <property type="entry name" value="HTH_type_WhiA"/>
    <property type="match status" value="1"/>
</dbReference>
<dbReference type="InterPro" id="IPR027434">
    <property type="entry name" value="Homing_endonucl"/>
</dbReference>
<dbReference type="InterPro" id="IPR004042">
    <property type="entry name" value="Intein_endonuc_central"/>
</dbReference>
<dbReference type="InterPro" id="IPR018478">
    <property type="entry name" value="Sporu_reg_WhiA_N_dom"/>
</dbReference>
<dbReference type="InterPro" id="IPR003802">
    <property type="entry name" value="Sporulation_regulator_WhiA"/>
</dbReference>
<dbReference type="InterPro" id="IPR023054">
    <property type="entry name" value="Sporulation_regulator_WhiA_C"/>
</dbReference>
<dbReference type="InterPro" id="IPR039518">
    <property type="entry name" value="WhiA_LAGLIDADG_dom"/>
</dbReference>
<dbReference type="NCBIfam" id="TIGR00647">
    <property type="entry name" value="DNA_bind_WhiA"/>
    <property type="match status" value="1"/>
</dbReference>
<dbReference type="PANTHER" id="PTHR37307">
    <property type="entry name" value="CELL DIVISION PROTEIN WHIA-RELATED"/>
    <property type="match status" value="1"/>
</dbReference>
<dbReference type="PANTHER" id="PTHR37307:SF1">
    <property type="entry name" value="CELL DIVISION PROTEIN WHIA-RELATED"/>
    <property type="match status" value="1"/>
</dbReference>
<dbReference type="Pfam" id="PF02650">
    <property type="entry name" value="HTH_WhiA"/>
    <property type="match status" value="1"/>
</dbReference>
<dbReference type="Pfam" id="PF14527">
    <property type="entry name" value="LAGLIDADG_WhiA"/>
    <property type="match status" value="1"/>
</dbReference>
<dbReference type="Pfam" id="PF10298">
    <property type="entry name" value="WhiA_N"/>
    <property type="match status" value="1"/>
</dbReference>
<dbReference type="SUPFAM" id="SSF55608">
    <property type="entry name" value="Homing endonucleases"/>
    <property type="match status" value="1"/>
</dbReference>
<dbReference type="PROSITE" id="PS50819">
    <property type="entry name" value="INTEIN_ENDONUCLEASE"/>
    <property type="match status" value="1"/>
</dbReference>
<name>WHIA_HELMI</name>
<protein>
    <recommendedName>
        <fullName evidence="1">Probable cell division protein WhiA</fullName>
    </recommendedName>
</protein>
<keyword id="KW-0131">Cell cycle</keyword>
<keyword id="KW-0132">Cell division</keyword>
<keyword id="KW-0238">DNA-binding</keyword>
<keyword id="KW-1185">Reference proteome</keyword>
<evidence type="ECO:0000255" key="1">
    <source>
        <dbReference type="HAMAP-Rule" id="MF_01420"/>
    </source>
</evidence>
<reference key="1">
    <citation type="journal article" date="2008" name="J. Bacteriol.">
        <title>The genome of Heliobacterium modesticaldum, a phototrophic representative of the Firmicutes containing the simplest photosynthetic apparatus.</title>
        <authorList>
            <person name="Sattley W.M."/>
            <person name="Madigan M.T."/>
            <person name="Swingley W.D."/>
            <person name="Cheung P.C."/>
            <person name="Clocksin K.M."/>
            <person name="Conrad A.L."/>
            <person name="Dejesa L.C."/>
            <person name="Honchak B.M."/>
            <person name="Jung D.O."/>
            <person name="Karbach L.E."/>
            <person name="Kurdoglu A."/>
            <person name="Lahiri S."/>
            <person name="Mastrian S.D."/>
            <person name="Page L.E."/>
            <person name="Taylor H.L."/>
            <person name="Wang Z.T."/>
            <person name="Raymond J."/>
            <person name="Chen M."/>
            <person name="Blankenship R.E."/>
            <person name="Touchman J.W."/>
        </authorList>
    </citation>
    <scope>NUCLEOTIDE SEQUENCE [LARGE SCALE GENOMIC DNA]</scope>
    <source>
        <strain>ATCC 51547 / Ice1</strain>
    </source>
</reference>
<feature type="chain" id="PRO_0000376490" description="Probable cell division protein WhiA">
    <location>
        <begin position="1"/>
        <end position="319"/>
    </location>
</feature>
<feature type="DNA-binding region" description="H-T-H motif" evidence="1">
    <location>
        <begin position="278"/>
        <end position="311"/>
    </location>
</feature>
<organism>
    <name type="scientific">Heliobacterium modesticaldum (strain ATCC 51547 / Ice1)</name>
    <dbReference type="NCBI Taxonomy" id="498761"/>
    <lineage>
        <taxon>Bacteria</taxon>
        <taxon>Bacillati</taxon>
        <taxon>Bacillota</taxon>
        <taxon>Clostridia</taxon>
        <taxon>Eubacteriales</taxon>
        <taxon>Heliobacteriaceae</taxon>
        <taxon>Heliomicrobium</taxon>
    </lineage>
</organism>
<proteinExistence type="inferred from homology"/>
<sequence length="319" mass="35838">MSFSVETKEELARIQPRRRCCQLAELAALFRMDGSLQISGEQGLSLTVSTESASSARKIFRLIKAVFGVQTQILVRRKRRLKKSNVYVISLPARIGGRDVLQEMGITDSQGGFSFEPPSELLKRQCCRRAYLRGAFLGGGSVNSPEGTYHLEIITNDETHARILSELLHRFGLTAKVSQRKGWFIVYLKESEQIVEMLSIIGAHSALLNFENVRIVKGMRNQVNRLVNCETANLNKTVDAALRQTEMIRFVQNRIGFANLPSQLREVAELRLQYPDASLKELGQMLNPPVGKSGVNHRLRRLESLAEAFSRQGGVPRED</sequence>
<comment type="function">
    <text evidence="1">Involved in cell division and chromosome segregation.</text>
</comment>
<comment type="similarity">
    <text evidence="1">Belongs to the WhiA family.</text>
</comment>